<keyword id="KW-0963">Cytoplasm</keyword>
<keyword id="KW-0221">Differentiation</keyword>
<keyword id="KW-0378">Hydrolase</keyword>
<keyword id="KW-0391">Immunity</keyword>
<keyword id="KW-0539">Nucleus</keyword>
<keyword id="KW-0645">Protease</keyword>
<keyword id="KW-0647">Proteasome</keyword>
<keyword id="KW-1185">Reference proteome</keyword>
<keyword id="KW-0888">Threonine protease</keyword>
<keyword id="KW-0865">Zymogen</keyword>
<dbReference type="EC" id="3.4.25.1"/>
<dbReference type="EMBL" id="F14798">
    <property type="protein sequence ID" value="CAA23263.1"/>
    <property type="molecule type" value="mRNA"/>
</dbReference>
<dbReference type="STRING" id="9823.ENSSSCP00000037739"/>
<dbReference type="PaxDb" id="9823-ENSSSCP00000001580"/>
<dbReference type="PeptideAtlas" id="Q29576"/>
<dbReference type="eggNOG" id="KOG0175">
    <property type="taxonomic scope" value="Eukaryota"/>
</dbReference>
<dbReference type="InParanoid" id="Q29576"/>
<dbReference type="Proteomes" id="UP000008227">
    <property type="component" value="Unplaced"/>
</dbReference>
<dbReference type="Proteomes" id="UP000314985">
    <property type="component" value="Unplaced"/>
</dbReference>
<dbReference type="Proteomes" id="UP000694570">
    <property type="component" value="Unplaced"/>
</dbReference>
<dbReference type="Proteomes" id="UP000694571">
    <property type="component" value="Unplaced"/>
</dbReference>
<dbReference type="Proteomes" id="UP000694720">
    <property type="component" value="Unplaced"/>
</dbReference>
<dbReference type="Proteomes" id="UP000694722">
    <property type="component" value="Unplaced"/>
</dbReference>
<dbReference type="Proteomes" id="UP000694723">
    <property type="component" value="Unplaced"/>
</dbReference>
<dbReference type="Proteomes" id="UP000694724">
    <property type="component" value="Unplaced"/>
</dbReference>
<dbReference type="Proteomes" id="UP000694725">
    <property type="component" value="Unplaced"/>
</dbReference>
<dbReference type="Proteomes" id="UP000694726">
    <property type="component" value="Unplaced"/>
</dbReference>
<dbReference type="Proteomes" id="UP000694727">
    <property type="component" value="Unplaced"/>
</dbReference>
<dbReference type="Proteomes" id="UP000694728">
    <property type="component" value="Unplaced"/>
</dbReference>
<dbReference type="GO" id="GO:0005737">
    <property type="term" value="C:cytoplasm"/>
    <property type="evidence" value="ECO:0007669"/>
    <property type="project" value="UniProtKB-SubCell"/>
</dbReference>
<dbReference type="GO" id="GO:0005634">
    <property type="term" value="C:nucleus"/>
    <property type="evidence" value="ECO:0007669"/>
    <property type="project" value="UniProtKB-SubCell"/>
</dbReference>
<dbReference type="GO" id="GO:0005839">
    <property type="term" value="C:proteasome core complex"/>
    <property type="evidence" value="ECO:0000250"/>
    <property type="project" value="UniProtKB"/>
</dbReference>
<dbReference type="GO" id="GO:0019774">
    <property type="term" value="C:proteasome core complex, beta-subunit complex"/>
    <property type="evidence" value="ECO:0000250"/>
    <property type="project" value="UniProtKB"/>
</dbReference>
<dbReference type="GO" id="GO:1990111">
    <property type="term" value="C:spermatoproteasome complex"/>
    <property type="evidence" value="ECO:0000250"/>
    <property type="project" value="UniProtKB"/>
</dbReference>
<dbReference type="GO" id="GO:0004298">
    <property type="term" value="F:threonine-type endopeptidase activity"/>
    <property type="evidence" value="ECO:0007669"/>
    <property type="project" value="UniProtKB-KW"/>
</dbReference>
<dbReference type="GO" id="GO:0045444">
    <property type="term" value="P:fat cell differentiation"/>
    <property type="evidence" value="ECO:0000250"/>
    <property type="project" value="UniProtKB"/>
</dbReference>
<dbReference type="GO" id="GO:0002376">
    <property type="term" value="P:immune system process"/>
    <property type="evidence" value="ECO:0007669"/>
    <property type="project" value="UniProtKB-KW"/>
</dbReference>
<dbReference type="GO" id="GO:0051603">
    <property type="term" value="P:proteolysis involved in protein catabolic process"/>
    <property type="evidence" value="ECO:0007669"/>
    <property type="project" value="InterPro"/>
</dbReference>
<dbReference type="Gene3D" id="3.60.20.10">
    <property type="entry name" value="Glutamine Phosphoribosylpyrophosphate, subunit 1, domain 1"/>
    <property type="match status" value="1"/>
</dbReference>
<dbReference type="InterPro" id="IPR029055">
    <property type="entry name" value="Ntn_hydrolases_N"/>
</dbReference>
<dbReference type="InterPro" id="IPR000243">
    <property type="entry name" value="Pept_T1A_subB"/>
</dbReference>
<dbReference type="InterPro" id="IPR001353">
    <property type="entry name" value="Proteasome_sua/b"/>
</dbReference>
<dbReference type="InterPro" id="IPR023333">
    <property type="entry name" value="Proteasome_suB-type"/>
</dbReference>
<dbReference type="PANTHER" id="PTHR32194">
    <property type="entry name" value="METALLOPROTEASE TLDD"/>
    <property type="match status" value="1"/>
</dbReference>
<dbReference type="PANTHER" id="PTHR32194:SF8">
    <property type="entry name" value="PROTEASOME SUBUNIT BETA"/>
    <property type="match status" value="1"/>
</dbReference>
<dbReference type="Pfam" id="PF00227">
    <property type="entry name" value="Proteasome"/>
    <property type="match status" value="1"/>
</dbReference>
<dbReference type="PRINTS" id="PR00141">
    <property type="entry name" value="PROTEASOME"/>
</dbReference>
<dbReference type="SUPFAM" id="SSF56235">
    <property type="entry name" value="N-terminal nucleophile aminohydrolases (Ntn hydrolases)"/>
    <property type="match status" value="1"/>
</dbReference>
<dbReference type="PROSITE" id="PS51476">
    <property type="entry name" value="PROTEASOME_BETA_2"/>
    <property type="match status" value="1"/>
</dbReference>
<comment type="function">
    <text evidence="1 2">The proteasome is a multicatalytic proteinase complex which is characterized by its ability to cleave peptides with Arg, Phe, Tyr, Leu, and Glu adjacent to the leaving group at neutral or slightly basic pH. The proteasome has an ATP-dependent proteolytic activity. This subunit is involved in antigen processing to generate class I binding peptides. May participate in the generation of spliced peptides resulting from the ligation of two separate proteasomal cleavage products that are not contiguous in the parental protein (By similarity). Required for adipocyte differentiation (By similarity).</text>
</comment>
<comment type="catalytic activity">
    <reaction>
        <text>Cleavage of peptide bonds with very broad specificity.</text>
        <dbReference type="EC" id="3.4.25.1"/>
    </reaction>
</comment>
<comment type="subunit">
    <text evidence="1">The 26S proteasome consists of a 20S proteasome core and two 19S regulatory subunits. The 20S proteasome core is composed of 28 subunits that are arranged in four stacked rings, resulting in a barrel-shaped structure. The two end rings are each formed by seven alpha subunits, and the two central rings are each formed by seven beta subunits. The catalytic chamber with the active sites is on the inside of the barrel. Component of the immunoproteasome, where it displaces the equivalent housekeeping subunit PSMB5. Component of the spermatoproteasome, a form of the proteasome specifically found in testis. Directly interacts with POMP (By similarity).</text>
</comment>
<comment type="subcellular location">
    <subcellularLocation>
        <location evidence="3">Cytoplasm</location>
    </subcellularLocation>
    <subcellularLocation>
        <location evidence="1">Nucleus</location>
    </subcellularLocation>
</comment>
<comment type="induction">
    <text>Up-regulated by interferon gamma (at protein level).</text>
</comment>
<comment type="similarity">
    <text evidence="3">Belongs to the peptidase T1B family.</text>
</comment>
<name>PSB8_PIG</name>
<reference key="1">
    <citation type="journal article" date="1996" name="Mamm. Genome">
        <title>Evaluation and characterization of a porcine small intestine cDNA library: analysis of 839 clones.</title>
        <authorList>
            <person name="Winteroe A.K."/>
            <person name="Fredholm M."/>
            <person name="Davies W."/>
        </authorList>
    </citation>
    <scope>NUCLEOTIDE SEQUENCE [LARGE SCALE MRNA]</scope>
    <source>
        <tissue>Small intestine</tissue>
    </source>
</reference>
<proteinExistence type="evidence at protein level"/>
<sequence length="104" mass="11604">RLYYLRNGARISVSAASKLXSNMMYQYRGMGLSMGSMICGWDKKGPGLYYVDENGTRLSGNMFSTGSGNTYAYGVMDSGHRYDLSIEEAYDLGRRAIVHATHRD</sequence>
<feature type="chain" id="PRO_0000148074" description="Proteasome subunit beta type-8">
    <location>
        <begin position="1" status="less than"/>
        <end position="104" status="greater than"/>
    </location>
</feature>
<feature type="non-terminal residue">
    <location>
        <position position="1"/>
    </location>
</feature>
<feature type="non-terminal residue">
    <location>
        <position position="104"/>
    </location>
</feature>
<accession>Q29576</accession>
<organism>
    <name type="scientific">Sus scrofa</name>
    <name type="common">Pig</name>
    <dbReference type="NCBI Taxonomy" id="9823"/>
    <lineage>
        <taxon>Eukaryota</taxon>
        <taxon>Metazoa</taxon>
        <taxon>Chordata</taxon>
        <taxon>Craniata</taxon>
        <taxon>Vertebrata</taxon>
        <taxon>Euteleostomi</taxon>
        <taxon>Mammalia</taxon>
        <taxon>Eutheria</taxon>
        <taxon>Laurasiatheria</taxon>
        <taxon>Artiodactyla</taxon>
        <taxon>Suina</taxon>
        <taxon>Suidae</taxon>
        <taxon>Sus</taxon>
    </lineage>
</organism>
<evidence type="ECO:0000250" key="1"/>
<evidence type="ECO:0000250" key="2">
    <source>
        <dbReference type="UniProtKB" id="P28062"/>
    </source>
</evidence>
<evidence type="ECO:0000255" key="3">
    <source>
        <dbReference type="PROSITE-ProRule" id="PRU00809"/>
    </source>
</evidence>
<protein>
    <recommendedName>
        <fullName>Proteasome subunit beta type-8</fullName>
        <ecNumber>3.4.25.1</ecNumber>
    </recommendedName>
    <alternativeName>
        <fullName>Macropain subunit C13</fullName>
    </alternativeName>
    <alternativeName>
        <fullName>Multicatalytic endopeptidase complex subunit C13</fullName>
    </alternativeName>
    <alternativeName>
        <fullName>Proteasome component C13</fullName>
    </alternativeName>
    <alternativeName>
        <fullName>Proteasome subunit beta-5i</fullName>
    </alternativeName>
</protein>
<gene>
    <name type="primary">PSMB8</name>
</gene>